<feature type="chain" id="PRO_0000260913" description="Large ribosomal subunit protein uL6">
    <location>
        <begin position="1"/>
        <end position="179"/>
    </location>
</feature>
<name>RL6_PROMM</name>
<comment type="function">
    <text evidence="1">This protein binds to the 23S rRNA, and is important in its secondary structure. It is located near the subunit interface in the base of the L7/L12 stalk, and near the tRNA binding site of the peptidyltransferase center.</text>
</comment>
<comment type="subunit">
    <text evidence="1">Part of the 50S ribosomal subunit.</text>
</comment>
<comment type="similarity">
    <text evidence="1">Belongs to the universal ribosomal protein uL6 family.</text>
</comment>
<dbReference type="EMBL" id="BX548175">
    <property type="protein sequence ID" value="CAE21921.1"/>
    <property type="molecule type" value="Genomic_DNA"/>
</dbReference>
<dbReference type="RefSeq" id="WP_011131113.1">
    <property type="nucleotide sequence ID" value="NC_005071.1"/>
</dbReference>
<dbReference type="SMR" id="Q7V531"/>
<dbReference type="KEGG" id="pmt:PMT_1746"/>
<dbReference type="eggNOG" id="COG0097">
    <property type="taxonomic scope" value="Bacteria"/>
</dbReference>
<dbReference type="HOGENOM" id="CLU_065464_1_2_3"/>
<dbReference type="OrthoDB" id="9805007at2"/>
<dbReference type="Proteomes" id="UP000001423">
    <property type="component" value="Chromosome"/>
</dbReference>
<dbReference type="GO" id="GO:0022625">
    <property type="term" value="C:cytosolic large ribosomal subunit"/>
    <property type="evidence" value="ECO:0007669"/>
    <property type="project" value="TreeGrafter"/>
</dbReference>
<dbReference type="GO" id="GO:0019843">
    <property type="term" value="F:rRNA binding"/>
    <property type="evidence" value="ECO:0007669"/>
    <property type="project" value="UniProtKB-UniRule"/>
</dbReference>
<dbReference type="GO" id="GO:0003735">
    <property type="term" value="F:structural constituent of ribosome"/>
    <property type="evidence" value="ECO:0007669"/>
    <property type="project" value="InterPro"/>
</dbReference>
<dbReference type="GO" id="GO:0002181">
    <property type="term" value="P:cytoplasmic translation"/>
    <property type="evidence" value="ECO:0007669"/>
    <property type="project" value="TreeGrafter"/>
</dbReference>
<dbReference type="FunFam" id="3.90.930.12:FF:000001">
    <property type="entry name" value="50S ribosomal protein L6"/>
    <property type="match status" value="1"/>
</dbReference>
<dbReference type="FunFam" id="3.90.930.12:FF:000002">
    <property type="entry name" value="50S ribosomal protein L6"/>
    <property type="match status" value="1"/>
</dbReference>
<dbReference type="Gene3D" id="3.90.930.12">
    <property type="entry name" value="Ribosomal protein L6, alpha-beta domain"/>
    <property type="match status" value="2"/>
</dbReference>
<dbReference type="HAMAP" id="MF_01365_B">
    <property type="entry name" value="Ribosomal_uL6_B"/>
    <property type="match status" value="1"/>
</dbReference>
<dbReference type="InterPro" id="IPR000702">
    <property type="entry name" value="Ribosomal_uL6-like"/>
</dbReference>
<dbReference type="InterPro" id="IPR036789">
    <property type="entry name" value="Ribosomal_uL6-like_a/b-dom_sf"/>
</dbReference>
<dbReference type="InterPro" id="IPR020040">
    <property type="entry name" value="Ribosomal_uL6_a/b-dom"/>
</dbReference>
<dbReference type="InterPro" id="IPR019906">
    <property type="entry name" value="Ribosomal_uL6_bac-type"/>
</dbReference>
<dbReference type="InterPro" id="IPR002358">
    <property type="entry name" value="Ribosomal_uL6_CS"/>
</dbReference>
<dbReference type="NCBIfam" id="TIGR03654">
    <property type="entry name" value="L6_bact"/>
    <property type="match status" value="1"/>
</dbReference>
<dbReference type="PANTHER" id="PTHR11655">
    <property type="entry name" value="60S/50S RIBOSOMAL PROTEIN L6/L9"/>
    <property type="match status" value="1"/>
</dbReference>
<dbReference type="PANTHER" id="PTHR11655:SF14">
    <property type="entry name" value="LARGE RIBOSOMAL SUBUNIT PROTEIN UL6M"/>
    <property type="match status" value="1"/>
</dbReference>
<dbReference type="Pfam" id="PF00347">
    <property type="entry name" value="Ribosomal_L6"/>
    <property type="match status" value="2"/>
</dbReference>
<dbReference type="PIRSF" id="PIRSF002162">
    <property type="entry name" value="Ribosomal_L6"/>
    <property type="match status" value="1"/>
</dbReference>
<dbReference type="PRINTS" id="PR00059">
    <property type="entry name" value="RIBOSOMALL6"/>
</dbReference>
<dbReference type="SUPFAM" id="SSF56053">
    <property type="entry name" value="Ribosomal protein L6"/>
    <property type="match status" value="2"/>
</dbReference>
<dbReference type="PROSITE" id="PS00525">
    <property type="entry name" value="RIBOSOMAL_L6_1"/>
    <property type="match status" value="1"/>
</dbReference>
<gene>
    <name evidence="1" type="primary">rplF</name>
    <name evidence="1" type="synonym">rpl6</name>
    <name type="ordered locus">PMT_1746</name>
</gene>
<protein>
    <recommendedName>
        <fullName evidence="1">Large ribosomal subunit protein uL6</fullName>
    </recommendedName>
    <alternativeName>
        <fullName evidence="2">50S ribosomal protein L6</fullName>
    </alternativeName>
</protein>
<sequence>MSRIGKNPIPIPDKVAVTLDGLAVSVKGPKGELSRTLPEGVSVSQVENTIVVTPTSQKRKSRERHGLCRSLVANMVEGVSKGYTRKLELIGVGSRAQVKGKKLVVSAGFSHPVEMDPPEGVTFAVENNTNVTVSGADKELVGNEAAKIRAIRPPEPYKGKGIRYEGERILRKAGKSGKK</sequence>
<evidence type="ECO:0000255" key="1">
    <source>
        <dbReference type="HAMAP-Rule" id="MF_01365"/>
    </source>
</evidence>
<evidence type="ECO:0000305" key="2"/>
<keyword id="KW-1185">Reference proteome</keyword>
<keyword id="KW-0687">Ribonucleoprotein</keyword>
<keyword id="KW-0689">Ribosomal protein</keyword>
<keyword id="KW-0694">RNA-binding</keyword>
<keyword id="KW-0699">rRNA-binding</keyword>
<reference key="1">
    <citation type="journal article" date="2003" name="Nature">
        <title>Genome divergence in two Prochlorococcus ecotypes reflects oceanic niche differentiation.</title>
        <authorList>
            <person name="Rocap G."/>
            <person name="Larimer F.W."/>
            <person name="Lamerdin J.E."/>
            <person name="Malfatti S."/>
            <person name="Chain P."/>
            <person name="Ahlgren N.A."/>
            <person name="Arellano A."/>
            <person name="Coleman M."/>
            <person name="Hauser L."/>
            <person name="Hess W.R."/>
            <person name="Johnson Z.I."/>
            <person name="Land M.L."/>
            <person name="Lindell D."/>
            <person name="Post A.F."/>
            <person name="Regala W."/>
            <person name="Shah M."/>
            <person name="Shaw S.L."/>
            <person name="Steglich C."/>
            <person name="Sullivan M.B."/>
            <person name="Ting C.S."/>
            <person name="Tolonen A."/>
            <person name="Webb E.A."/>
            <person name="Zinser E.R."/>
            <person name="Chisholm S.W."/>
        </authorList>
    </citation>
    <scope>NUCLEOTIDE SEQUENCE [LARGE SCALE GENOMIC DNA]</scope>
    <source>
        <strain>MIT 9313</strain>
    </source>
</reference>
<proteinExistence type="inferred from homology"/>
<accession>Q7V531</accession>
<organism>
    <name type="scientific">Prochlorococcus marinus (strain MIT 9313)</name>
    <dbReference type="NCBI Taxonomy" id="74547"/>
    <lineage>
        <taxon>Bacteria</taxon>
        <taxon>Bacillati</taxon>
        <taxon>Cyanobacteriota</taxon>
        <taxon>Cyanophyceae</taxon>
        <taxon>Synechococcales</taxon>
        <taxon>Prochlorococcaceae</taxon>
        <taxon>Prochlorococcus</taxon>
    </lineage>
</organism>